<gene>
    <name type="primary">STMN3</name>
    <name type="synonym">SCLIP</name>
</gene>
<accession>Q9NZ72</accession>
<accession>B3KSQ5</accession>
<accession>B7WP52</accession>
<accession>B7Z5G4</accession>
<accession>O75527</accession>
<accession>Q969Y4</accession>
<keyword id="KW-0025">Alternative splicing</keyword>
<keyword id="KW-0966">Cell projection</keyword>
<keyword id="KW-0175">Coiled coil</keyword>
<keyword id="KW-0963">Cytoplasm</keyword>
<keyword id="KW-0333">Golgi apparatus</keyword>
<keyword id="KW-0449">Lipoprotein</keyword>
<keyword id="KW-0564">Palmitate</keyword>
<keyword id="KW-0597">Phosphoprotein</keyword>
<keyword id="KW-1267">Proteomics identification</keyword>
<keyword id="KW-1185">Reference proteome</keyword>
<dbReference type="EMBL" id="AF069709">
    <property type="protein sequence ID" value="AAD12730.1"/>
    <property type="molecule type" value="mRNA"/>
</dbReference>
<dbReference type="EMBL" id="AF217796">
    <property type="protein sequence ID" value="AAF35245.1"/>
    <property type="molecule type" value="Genomic_DNA"/>
</dbReference>
<dbReference type="EMBL" id="AK094112">
    <property type="protein sequence ID" value="BAG52817.1"/>
    <property type="molecule type" value="mRNA"/>
</dbReference>
<dbReference type="EMBL" id="AK298903">
    <property type="protein sequence ID" value="BAH12900.1"/>
    <property type="molecule type" value="mRNA"/>
</dbReference>
<dbReference type="EMBL" id="AL353715">
    <property type="status" value="NOT_ANNOTATED_CDS"/>
    <property type="molecule type" value="Genomic_DNA"/>
</dbReference>
<dbReference type="EMBL" id="BC009381">
    <property type="protein sequence ID" value="AAH09381.1"/>
    <property type="molecule type" value="mRNA"/>
</dbReference>
<dbReference type="EMBL" id="BC025234">
    <property type="protein sequence ID" value="AAH25234.1"/>
    <property type="molecule type" value="mRNA"/>
</dbReference>
<dbReference type="CCDS" id="CCDS13529.1">
    <molecule id="Q9NZ72-1"/>
</dbReference>
<dbReference type="CCDS" id="CCDS63330.1">
    <molecule id="Q9NZ72-2"/>
</dbReference>
<dbReference type="RefSeq" id="NP_001263239.1">
    <molecule id="Q9NZ72-2"/>
    <property type="nucleotide sequence ID" value="NM_001276310.2"/>
</dbReference>
<dbReference type="RefSeq" id="NP_056978.2">
    <molecule id="Q9NZ72-1"/>
    <property type="nucleotide sequence ID" value="NM_015894.3"/>
</dbReference>
<dbReference type="SMR" id="Q9NZ72"/>
<dbReference type="BioGRID" id="119161">
    <property type="interactions" value="46"/>
</dbReference>
<dbReference type="FunCoup" id="Q9NZ72">
    <property type="interactions" value="188"/>
</dbReference>
<dbReference type="IntAct" id="Q9NZ72">
    <property type="interactions" value="38"/>
</dbReference>
<dbReference type="MINT" id="Q9NZ72"/>
<dbReference type="STRING" id="9606.ENSP00000359070"/>
<dbReference type="GlyGen" id="Q9NZ72">
    <property type="glycosylation" value="1 site, 1 N-linked glycan (1 site)"/>
</dbReference>
<dbReference type="iPTMnet" id="Q9NZ72"/>
<dbReference type="PhosphoSitePlus" id="Q9NZ72"/>
<dbReference type="SwissPalm" id="Q9NZ72"/>
<dbReference type="BioMuta" id="STMN3"/>
<dbReference type="DMDM" id="20141809"/>
<dbReference type="jPOST" id="Q9NZ72"/>
<dbReference type="MassIVE" id="Q9NZ72"/>
<dbReference type="PaxDb" id="9606-ENSP00000359070"/>
<dbReference type="PeptideAtlas" id="Q9NZ72"/>
<dbReference type="ProteomicsDB" id="6691"/>
<dbReference type="ProteomicsDB" id="83338">
    <molecule id="Q9NZ72-1"/>
</dbReference>
<dbReference type="Pumba" id="Q9NZ72"/>
<dbReference type="Antibodypedia" id="29816">
    <property type="antibodies" value="184 antibodies from 29 providers"/>
</dbReference>
<dbReference type="DNASU" id="50861"/>
<dbReference type="Ensembl" id="ENST00000370053.3">
    <molecule id="Q9NZ72-1"/>
    <property type="protein sequence ID" value="ENSP00000359070.1"/>
    <property type="gene ID" value="ENSG00000197457.10"/>
</dbReference>
<dbReference type="Ensembl" id="ENST00000540534.5">
    <molecule id="Q9NZ72-2"/>
    <property type="protein sequence ID" value="ENSP00000439840.1"/>
    <property type="gene ID" value="ENSG00000197457.10"/>
</dbReference>
<dbReference type="GeneID" id="50861"/>
<dbReference type="KEGG" id="hsa:50861"/>
<dbReference type="MANE-Select" id="ENST00000370053.3">
    <property type="protein sequence ID" value="ENSP00000359070.1"/>
    <property type="RefSeq nucleotide sequence ID" value="NM_015894.4"/>
    <property type="RefSeq protein sequence ID" value="NP_056978.2"/>
</dbReference>
<dbReference type="UCSC" id="uc002yfr.3">
    <molecule id="Q9NZ72-1"/>
    <property type="organism name" value="human"/>
</dbReference>
<dbReference type="AGR" id="HGNC:15926"/>
<dbReference type="CTD" id="50861"/>
<dbReference type="DisGeNET" id="50861"/>
<dbReference type="GeneCards" id="STMN3"/>
<dbReference type="HGNC" id="HGNC:15926">
    <property type="gene designation" value="STMN3"/>
</dbReference>
<dbReference type="HPA" id="ENSG00000197457">
    <property type="expression patterns" value="Tissue enhanced (brain)"/>
</dbReference>
<dbReference type="MIM" id="608362">
    <property type="type" value="gene"/>
</dbReference>
<dbReference type="neXtProt" id="NX_Q9NZ72"/>
<dbReference type="OpenTargets" id="ENSG00000197457"/>
<dbReference type="PharmGKB" id="PA38049"/>
<dbReference type="VEuPathDB" id="HostDB:ENSG00000197457"/>
<dbReference type="eggNOG" id="KOG1280">
    <property type="taxonomic scope" value="Eukaryota"/>
</dbReference>
<dbReference type="GeneTree" id="ENSGT01030000234597"/>
<dbReference type="HOGENOM" id="CLU_102026_0_0_1"/>
<dbReference type="InParanoid" id="Q9NZ72"/>
<dbReference type="OMA" id="MPTAYKE"/>
<dbReference type="OrthoDB" id="5986631at2759"/>
<dbReference type="PAN-GO" id="Q9NZ72">
    <property type="GO annotations" value="6 GO annotations based on evolutionary models"/>
</dbReference>
<dbReference type="PhylomeDB" id="Q9NZ72"/>
<dbReference type="TreeFam" id="TF326935"/>
<dbReference type="PathwayCommons" id="Q9NZ72"/>
<dbReference type="SignaLink" id="Q9NZ72"/>
<dbReference type="SIGNOR" id="Q9NZ72"/>
<dbReference type="BioGRID-ORCS" id="50861">
    <property type="hits" value="15 hits in 1155 CRISPR screens"/>
</dbReference>
<dbReference type="ChiTaRS" id="STMN3">
    <property type="organism name" value="human"/>
</dbReference>
<dbReference type="GeneWiki" id="STMN3"/>
<dbReference type="GenomeRNAi" id="50861"/>
<dbReference type="Pharos" id="Q9NZ72">
    <property type="development level" value="Tbio"/>
</dbReference>
<dbReference type="PRO" id="PR:Q9NZ72"/>
<dbReference type="Proteomes" id="UP000005640">
    <property type="component" value="Chromosome 20"/>
</dbReference>
<dbReference type="RNAct" id="Q9NZ72">
    <property type="molecule type" value="protein"/>
</dbReference>
<dbReference type="Bgee" id="ENSG00000197457">
    <property type="expression patterns" value="Expressed in pons and 154 other cell types or tissues"/>
</dbReference>
<dbReference type="ExpressionAtlas" id="Q9NZ72">
    <property type="expression patterns" value="baseline and differential"/>
</dbReference>
<dbReference type="GO" id="GO:0005737">
    <property type="term" value="C:cytoplasm"/>
    <property type="evidence" value="ECO:0000250"/>
    <property type="project" value="HGNC-UCL"/>
</dbReference>
<dbReference type="GO" id="GO:0005829">
    <property type="term" value="C:cytosol"/>
    <property type="evidence" value="ECO:0000314"/>
    <property type="project" value="HPA"/>
</dbReference>
<dbReference type="GO" id="GO:0005794">
    <property type="term" value="C:Golgi apparatus"/>
    <property type="evidence" value="ECO:0000314"/>
    <property type="project" value="HPA"/>
</dbReference>
<dbReference type="GO" id="GO:0030426">
    <property type="term" value="C:growth cone"/>
    <property type="evidence" value="ECO:0007669"/>
    <property type="project" value="UniProtKB-SubCell"/>
</dbReference>
<dbReference type="GO" id="GO:0043005">
    <property type="term" value="C:neuron projection"/>
    <property type="evidence" value="ECO:0000318"/>
    <property type="project" value="GO_Central"/>
</dbReference>
<dbReference type="GO" id="GO:0019904">
    <property type="term" value="F:protein domain specific binding"/>
    <property type="evidence" value="ECO:0000250"/>
    <property type="project" value="HGNC-UCL"/>
</dbReference>
<dbReference type="GO" id="GO:0015631">
    <property type="term" value="F:tubulin binding"/>
    <property type="evidence" value="ECO:0000318"/>
    <property type="project" value="GO_Central"/>
</dbReference>
<dbReference type="GO" id="GO:0001835">
    <property type="term" value="P:blastocyst hatching"/>
    <property type="evidence" value="ECO:0007669"/>
    <property type="project" value="Ensembl"/>
</dbReference>
<dbReference type="GO" id="GO:0031122">
    <property type="term" value="P:cytoplasmic microtubule organization"/>
    <property type="evidence" value="ECO:0000250"/>
    <property type="project" value="HGNC-UCL"/>
</dbReference>
<dbReference type="GO" id="GO:0007019">
    <property type="term" value="P:microtubule depolymerization"/>
    <property type="evidence" value="ECO:0000318"/>
    <property type="project" value="GO_Central"/>
</dbReference>
<dbReference type="GO" id="GO:0010977">
    <property type="term" value="P:negative regulation of neuron projection development"/>
    <property type="evidence" value="ECO:0000250"/>
    <property type="project" value="HGNC-UCL"/>
</dbReference>
<dbReference type="GO" id="GO:0035021">
    <property type="term" value="P:negative regulation of Rac protein signal transduction"/>
    <property type="evidence" value="ECO:0000250"/>
    <property type="project" value="HGNC-UCL"/>
</dbReference>
<dbReference type="GO" id="GO:0007399">
    <property type="term" value="P:nervous system development"/>
    <property type="evidence" value="ECO:0000304"/>
    <property type="project" value="ProtInc"/>
</dbReference>
<dbReference type="GO" id="GO:0031175">
    <property type="term" value="P:neuron projection development"/>
    <property type="evidence" value="ECO:0000318"/>
    <property type="project" value="GO_Central"/>
</dbReference>
<dbReference type="GO" id="GO:0051493">
    <property type="term" value="P:regulation of cytoskeleton organization"/>
    <property type="evidence" value="ECO:0000250"/>
    <property type="project" value="HGNC-UCL"/>
</dbReference>
<dbReference type="GO" id="GO:0031110">
    <property type="term" value="P:regulation of microtubule polymerization or depolymerization"/>
    <property type="evidence" value="ECO:0000318"/>
    <property type="project" value="GO_Central"/>
</dbReference>
<dbReference type="Gene3D" id="6.10.280.30">
    <property type="match status" value="1"/>
</dbReference>
<dbReference type="InterPro" id="IPR030514">
    <property type="entry name" value="Stathmin_CS"/>
</dbReference>
<dbReference type="InterPro" id="IPR000956">
    <property type="entry name" value="Stathmin_fam"/>
</dbReference>
<dbReference type="InterPro" id="IPR036002">
    <property type="entry name" value="Stathmin_sf"/>
</dbReference>
<dbReference type="PANTHER" id="PTHR10104">
    <property type="entry name" value="STATHMIN"/>
    <property type="match status" value="1"/>
</dbReference>
<dbReference type="PANTHER" id="PTHR10104:SF17">
    <property type="entry name" value="STATHMIN-3"/>
    <property type="match status" value="1"/>
</dbReference>
<dbReference type="Pfam" id="PF00836">
    <property type="entry name" value="Stathmin"/>
    <property type="match status" value="1"/>
</dbReference>
<dbReference type="PIRSF" id="PIRSF002285">
    <property type="entry name" value="Stathmin"/>
    <property type="match status" value="1"/>
</dbReference>
<dbReference type="PRINTS" id="PR00345">
    <property type="entry name" value="STATHMIN"/>
</dbReference>
<dbReference type="SUPFAM" id="SSF101494">
    <property type="entry name" value="Stathmin"/>
    <property type="match status" value="1"/>
</dbReference>
<dbReference type="PROSITE" id="PS00563">
    <property type="entry name" value="STATHMIN_1"/>
    <property type="match status" value="1"/>
</dbReference>
<dbReference type="PROSITE" id="PS01041">
    <property type="entry name" value="STATHMIN_2"/>
    <property type="match status" value="1"/>
</dbReference>
<dbReference type="PROSITE" id="PS51663">
    <property type="entry name" value="STATHMIN_3"/>
    <property type="match status" value="1"/>
</dbReference>
<proteinExistence type="evidence at protein level"/>
<feature type="chain" id="PRO_0000182402" description="Stathmin-3">
    <location>
        <begin position="1"/>
        <end position="180"/>
    </location>
</feature>
<feature type="domain" description="SLD" evidence="5">
    <location>
        <begin position="38"/>
        <end position="180"/>
    </location>
</feature>
<feature type="region of interest" description="Disordered" evidence="6">
    <location>
        <begin position="59"/>
        <end position="82"/>
    </location>
</feature>
<feature type="coiled-coil region" evidence="4">
    <location>
        <begin position="75"/>
        <end position="179"/>
    </location>
</feature>
<feature type="compositionally biased region" description="Low complexity" evidence="6">
    <location>
        <begin position="60"/>
        <end position="74"/>
    </location>
</feature>
<feature type="modified residue" description="Phosphoserine" evidence="2">
    <location>
        <position position="50"/>
    </location>
</feature>
<feature type="modified residue" description="Phosphoserine" evidence="2">
    <location>
        <position position="60"/>
    </location>
</feature>
<feature type="modified residue" description="Phosphoserine" evidence="2">
    <location>
        <position position="65"/>
    </location>
</feature>
<feature type="modified residue" description="Phosphoserine" evidence="2">
    <location>
        <position position="68"/>
    </location>
</feature>
<feature type="modified residue" description="Phosphoserine" evidence="2">
    <location>
        <position position="72"/>
    </location>
</feature>
<feature type="modified residue" description="Phosphoserine" evidence="2">
    <location>
        <position position="73"/>
    </location>
</feature>
<feature type="modified residue" description="Phosphoserine" evidence="3">
    <location>
        <position position="81"/>
    </location>
</feature>
<feature type="lipid moiety-binding region" description="S-palmitoyl cysteine" evidence="1">
    <location>
        <position position="22"/>
    </location>
</feature>
<feature type="lipid moiety-binding region" description="S-palmitoyl cysteine" evidence="1">
    <location>
        <position position="24"/>
    </location>
</feature>
<feature type="splice variant" id="VSP_056525" description="In isoform 2." evidence="8">
    <location>
        <begin position="1"/>
        <end position="11"/>
    </location>
</feature>
<feature type="sequence conflict" description="In Ref. 1; AAD12730." evidence="9" ref="1">
    <original>S</original>
    <variation>P</variation>
    <location>
        <position position="72"/>
    </location>
</feature>
<reference key="1">
    <citation type="journal article" date="1998" name="J. Neurochem.">
        <title>SCLIP: a novel SCG10-like protein of the stathmin family expressed in the nervous system.</title>
        <authorList>
            <person name="Ozon S."/>
            <person name="Byk T."/>
            <person name="Sobel A."/>
        </authorList>
    </citation>
    <scope>NUCLEOTIDE SEQUENCE [MRNA] (ISOFORM 1)</scope>
</reference>
<reference key="2">
    <citation type="journal article" date="2000" name="Proc. Natl. Acad. Sci. U.S.A.">
        <title>Overexpression of M68/DcR3 in human gastrointestinal tract tumors independent of gene amplification and its location in a four-gene cluster.</title>
        <authorList>
            <person name="Bai C."/>
            <person name="Connolly B."/>
            <person name="Metzker M.L."/>
            <person name="Hilliard C.A."/>
            <person name="Liu X."/>
            <person name="Sandig V."/>
            <person name="Soderman A."/>
            <person name="Galloway S.M."/>
            <person name="Liu Q."/>
            <person name="Austin C.P."/>
            <person name="Caskey C.T."/>
        </authorList>
    </citation>
    <scope>NUCLEOTIDE SEQUENCE [GENOMIC DNA]</scope>
</reference>
<reference key="3">
    <citation type="journal article" date="2004" name="Nat. Genet.">
        <title>Complete sequencing and characterization of 21,243 full-length human cDNAs.</title>
        <authorList>
            <person name="Ota T."/>
            <person name="Suzuki Y."/>
            <person name="Nishikawa T."/>
            <person name="Otsuki T."/>
            <person name="Sugiyama T."/>
            <person name="Irie R."/>
            <person name="Wakamatsu A."/>
            <person name="Hayashi K."/>
            <person name="Sato H."/>
            <person name="Nagai K."/>
            <person name="Kimura K."/>
            <person name="Makita H."/>
            <person name="Sekine M."/>
            <person name="Obayashi M."/>
            <person name="Nishi T."/>
            <person name="Shibahara T."/>
            <person name="Tanaka T."/>
            <person name="Ishii S."/>
            <person name="Yamamoto J."/>
            <person name="Saito K."/>
            <person name="Kawai Y."/>
            <person name="Isono Y."/>
            <person name="Nakamura Y."/>
            <person name="Nagahari K."/>
            <person name="Murakami K."/>
            <person name="Yasuda T."/>
            <person name="Iwayanagi T."/>
            <person name="Wagatsuma M."/>
            <person name="Shiratori A."/>
            <person name="Sudo H."/>
            <person name="Hosoiri T."/>
            <person name="Kaku Y."/>
            <person name="Kodaira H."/>
            <person name="Kondo H."/>
            <person name="Sugawara M."/>
            <person name="Takahashi M."/>
            <person name="Kanda K."/>
            <person name="Yokoi T."/>
            <person name="Furuya T."/>
            <person name="Kikkawa E."/>
            <person name="Omura Y."/>
            <person name="Abe K."/>
            <person name="Kamihara K."/>
            <person name="Katsuta N."/>
            <person name="Sato K."/>
            <person name="Tanikawa M."/>
            <person name="Yamazaki M."/>
            <person name="Ninomiya K."/>
            <person name="Ishibashi T."/>
            <person name="Yamashita H."/>
            <person name="Murakawa K."/>
            <person name="Fujimori K."/>
            <person name="Tanai H."/>
            <person name="Kimata M."/>
            <person name="Watanabe M."/>
            <person name="Hiraoka S."/>
            <person name="Chiba Y."/>
            <person name="Ishida S."/>
            <person name="Ono Y."/>
            <person name="Takiguchi S."/>
            <person name="Watanabe S."/>
            <person name="Yosida M."/>
            <person name="Hotuta T."/>
            <person name="Kusano J."/>
            <person name="Kanehori K."/>
            <person name="Takahashi-Fujii A."/>
            <person name="Hara H."/>
            <person name="Tanase T.-O."/>
            <person name="Nomura Y."/>
            <person name="Togiya S."/>
            <person name="Komai F."/>
            <person name="Hara R."/>
            <person name="Takeuchi K."/>
            <person name="Arita M."/>
            <person name="Imose N."/>
            <person name="Musashino K."/>
            <person name="Yuuki H."/>
            <person name="Oshima A."/>
            <person name="Sasaki N."/>
            <person name="Aotsuka S."/>
            <person name="Yoshikawa Y."/>
            <person name="Matsunawa H."/>
            <person name="Ichihara T."/>
            <person name="Shiohata N."/>
            <person name="Sano S."/>
            <person name="Moriya S."/>
            <person name="Momiyama H."/>
            <person name="Satoh N."/>
            <person name="Takami S."/>
            <person name="Terashima Y."/>
            <person name="Suzuki O."/>
            <person name="Nakagawa S."/>
            <person name="Senoh A."/>
            <person name="Mizoguchi H."/>
            <person name="Goto Y."/>
            <person name="Shimizu F."/>
            <person name="Wakebe H."/>
            <person name="Hishigaki H."/>
            <person name="Watanabe T."/>
            <person name="Sugiyama A."/>
            <person name="Takemoto M."/>
            <person name="Kawakami B."/>
            <person name="Yamazaki M."/>
            <person name="Watanabe K."/>
            <person name="Kumagai A."/>
            <person name="Itakura S."/>
            <person name="Fukuzumi Y."/>
            <person name="Fujimori Y."/>
            <person name="Komiyama M."/>
            <person name="Tashiro H."/>
            <person name="Tanigami A."/>
            <person name="Fujiwara T."/>
            <person name="Ono T."/>
            <person name="Yamada K."/>
            <person name="Fujii Y."/>
            <person name="Ozaki K."/>
            <person name="Hirao M."/>
            <person name="Ohmori Y."/>
            <person name="Kawabata A."/>
            <person name="Hikiji T."/>
            <person name="Kobatake N."/>
            <person name="Inagaki H."/>
            <person name="Ikema Y."/>
            <person name="Okamoto S."/>
            <person name="Okitani R."/>
            <person name="Kawakami T."/>
            <person name="Noguchi S."/>
            <person name="Itoh T."/>
            <person name="Shigeta K."/>
            <person name="Senba T."/>
            <person name="Matsumura K."/>
            <person name="Nakajima Y."/>
            <person name="Mizuno T."/>
            <person name="Morinaga M."/>
            <person name="Sasaki M."/>
            <person name="Togashi T."/>
            <person name="Oyama M."/>
            <person name="Hata H."/>
            <person name="Watanabe M."/>
            <person name="Komatsu T."/>
            <person name="Mizushima-Sugano J."/>
            <person name="Satoh T."/>
            <person name="Shirai Y."/>
            <person name="Takahashi Y."/>
            <person name="Nakagawa K."/>
            <person name="Okumura K."/>
            <person name="Nagase T."/>
            <person name="Nomura N."/>
            <person name="Kikuchi H."/>
            <person name="Masuho Y."/>
            <person name="Yamashita R."/>
            <person name="Nakai K."/>
            <person name="Yada T."/>
            <person name="Nakamura Y."/>
            <person name="Ohara O."/>
            <person name="Isogai T."/>
            <person name="Sugano S."/>
        </authorList>
    </citation>
    <scope>NUCLEOTIDE SEQUENCE [LARGE SCALE MRNA] (ISOFORMS 1 AND 2)</scope>
    <source>
        <tissue>Adrenal gland</tissue>
    </source>
</reference>
<reference key="4">
    <citation type="journal article" date="2001" name="Nature">
        <title>The DNA sequence and comparative analysis of human chromosome 20.</title>
        <authorList>
            <person name="Deloukas P."/>
            <person name="Matthews L.H."/>
            <person name="Ashurst J.L."/>
            <person name="Burton J."/>
            <person name="Gilbert J.G.R."/>
            <person name="Jones M."/>
            <person name="Stavrides G."/>
            <person name="Almeida J.P."/>
            <person name="Babbage A.K."/>
            <person name="Bagguley C.L."/>
            <person name="Bailey J."/>
            <person name="Barlow K.F."/>
            <person name="Bates K.N."/>
            <person name="Beard L.M."/>
            <person name="Beare D.M."/>
            <person name="Beasley O.P."/>
            <person name="Bird C.P."/>
            <person name="Blakey S.E."/>
            <person name="Bridgeman A.M."/>
            <person name="Brown A.J."/>
            <person name="Buck D."/>
            <person name="Burrill W.D."/>
            <person name="Butler A.P."/>
            <person name="Carder C."/>
            <person name="Carter N.P."/>
            <person name="Chapman J.C."/>
            <person name="Clamp M."/>
            <person name="Clark G."/>
            <person name="Clark L.N."/>
            <person name="Clark S.Y."/>
            <person name="Clee C.M."/>
            <person name="Clegg S."/>
            <person name="Cobley V.E."/>
            <person name="Collier R.E."/>
            <person name="Connor R.E."/>
            <person name="Corby N.R."/>
            <person name="Coulson A."/>
            <person name="Coville G.J."/>
            <person name="Deadman R."/>
            <person name="Dhami P.D."/>
            <person name="Dunn M."/>
            <person name="Ellington A.G."/>
            <person name="Frankland J.A."/>
            <person name="Fraser A."/>
            <person name="French L."/>
            <person name="Garner P."/>
            <person name="Grafham D.V."/>
            <person name="Griffiths C."/>
            <person name="Griffiths M.N.D."/>
            <person name="Gwilliam R."/>
            <person name="Hall R.E."/>
            <person name="Hammond S."/>
            <person name="Harley J.L."/>
            <person name="Heath P.D."/>
            <person name="Ho S."/>
            <person name="Holden J.L."/>
            <person name="Howden P.J."/>
            <person name="Huckle E."/>
            <person name="Hunt A.R."/>
            <person name="Hunt S.E."/>
            <person name="Jekosch K."/>
            <person name="Johnson C.M."/>
            <person name="Johnson D."/>
            <person name="Kay M.P."/>
            <person name="Kimberley A.M."/>
            <person name="King A."/>
            <person name="Knights A."/>
            <person name="Laird G.K."/>
            <person name="Lawlor S."/>
            <person name="Lehvaeslaiho M.H."/>
            <person name="Leversha M.A."/>
            <person name="Lloyd C."/>
            <person name="Lloyd D.M."/>
            <person name="Lovell J.D."/>
            <person name="Marsh V.L."/>
            <person name="Martin S.L."/>
            <person name="McConnachie L.J."/>
            <person name="McLay K."/>
            <person name="McMurray A.A."/>
            <person name="Milne S.A."/>
            <person name="Mistry D."/>
            <person name="Moore M.J.F."/>
            <person name="Mullikin J.C."/>
            <person name="Nickerson T."/>
            <person name="Oliver K."/>
            <person name="Parker A."/>
            <person name="Patel R."/>
            <person name="Pearce T.A.V."/>
            <person name="Peck A.I."/>
            <person name="Phillimore B.J.C.T."/>
            <person name="Prathalingam S.R."/>
            <person name="Plumb R.W."/>
            <person name="Ramsay H."/>
            <person name="Rice C.M."/>
            <person name="Ross M.T."/>
            <person name="Scott C.E."/>
            <person name="Sehra H.K."/>
            <person name="Shownkeen R."/>
            <person name="Sims S."/>
            <person name="Skuce C.D."/>
            <person name="Smith M.L."/>
            <person name="Soderlund C."/>
            <person name="Steward C.A."/>
            <person name="Sulston J.E."/>
            <person name="Swann R.M."/>
            <person name="Sycamore N."/>
            <person name="Taylor R."/>
            <person name="Tee L."/>
            <person name="Thomas D.W."/>
            <person name="Thorpe A."/>
            <person name="Tracey A."/>
            <person name="Tromans A.C."/>
            <person name="Vaudin M."/>
            <person name="Wall M."/>
            <person name="Wallis J.M."/>
            <person name="Whitehead S.L."/>
            <person name="Whittaker P."/>
            <person name="Willey D.L."/>
            <person name="Williams L."/>
            <person name="Williams S.A."/>
            <person name="Wilming L."/>
            <person name="Wray P.W."/>
            <person name="Hubbard T."/>
            <person name="Durbin R.M."/>
            <person name="Bentley D.R."/>
            <person name="Beck S."/>
            <person name="Rogers J."/>
        </authorList>
    </citation>
    <scope>NUCLEOTIDE SEQUENCE [LARGE SCALE GENOMIC DNA]</scope>
</reference>
<reference key="5">
    <citation type="journal article" date="2004" name="Genome Res.">
        <title>The status, quality, and expansion of the NIH full-length cDNA project: the Mammalian Gene Collection (MGC).</title>
        <authorList>
            <consortium name="The MGC Project Team"/>
        </authorList>
    </citation>
    <scope>NUCLEOTIDE SEQUENCE [LARGE SCALE MRNA] (ISOFORM 1)</scope>
    <source>
        <tissue>Brain</tissue>
    </source>
</reference>
<reference key="6">
    <citation type="journal article" date="2011" name="Mol. Biol. Cell">
        <title>Subcellular Golgi localization of stathmin family proteins is promoted by a specific set of DHHC palmitoyl transferases.</title>
        <authorList>
            <person name="Levy A.D."/>
            <person name="Devignot V."/>
            <person name="Fukata Y."/>
            <person name="Fukata M."/>
            <person name="Sobel A."/>
            <person name="Chauvin S."/>
        </authorList>
    </citation>
    <scope>PALMITOYLATION AT CYS-22 AND CYS-24 BY ZDHHC3; ZDHHC7 AND ZDHHC15</scope>
    <scope>SUBCELLULAR LOCATION</scope>
</reference>
<protein>
    <recommendedName>
        <fullName>Stathmin-3</fullName>
    </recommendedName>
    <alternativeName>
        <fullName>SCG10-like protein</fullName>
    </alternativeName>
</protein>
<sequence length="180" mass="21017">MASTISAYKEKMKELSVLSLICSCFYTQPHPNTVYQYGDMEVKQLDKRASGQSFEVILKSPSDLSPESPMLSSPPKKKDTSLEELQKRLEAAEERRKTQEAQVLKQLAERREHEREVLHKALEENNNFSRQAEEKLNYKMELSKEIREAHLAALRERLREKELHAAEVRRNKEQREEMSG</sequence>
<comment type="function">
    <text evidence="1">Exhibits microtubule-destabilizing activity, which is antagonized by STAT3.</text>
</comment>
<comment type="subunit">
    <text evidence="1 3">Interacts with STAT3. Interacts with CLU (secreted form); this interaction may act as an important modulator during neuronal differentiation (By similarity).</text>
</comment>
<comment type="interaction">
    <interactant intactId="EBI-725557">
        <id>Q9NZ72</id>
    </interactant>
    <interactant intactId="EBI-8643161">
        <id>Q9NX04</id>
        <label>AIRIM</label>
    </interactant>
    <organismsDiffer>false</organismsDiffer>
    <experiments>3</experiments>
</comment>
<comment type="interaction">
    <interactant intactId="EBI-725557">
        <id>Q9NZ72</id>
    </interactant>
    <interactant intactId="EBI-17183751">
        <id>X5D778</id>
        <label>ANKRD11</label>
    </interactant>
    <organismsDiffer>false</organismsDiffer>
    <experiments>3</experiments>
</comment>
<comment type="interaction">
    <interactant intactId="EBI-725557">
        <id>Q9NZ72</id>
    </interactant>
    <interactant intactId="EBI-11530605">
        <id>Q9H257-2</id>
        <label>CARD9</label>
    </interactant>
    <organismsDiffer>false</organismsDiffer>
    <experiments>3</experiments>
</comment>
<comment type="interaction">
    <interactant intactId="EBI-725557">
        <id>Q9NZ72</id>
    </interactant>
    <interactant intactId="EBI-10192241">
        <id>O95833</id>
        <label>CLIC3</label>
    </interactant>
    <organismsDiffer>false</organismsDiffer>
    <experiments>3</experiments>
</comment>
<comment type="interaction">
    <interactant intactId="EBI-725557">
        <id>Q9NZ72</id>
    </interactant>
    <interactant intactId="EBI-11962928">
        <id>Q9UI47-2</id>
        <label>CTNNA3</label>
    </interactant>
    <organismsDiffer>false</organismsDiffer>
    <experiments>3</experiments>
</comment>
<comment type="interaction">
    <interactant intactId="EBI-725557">
        <id>Q9NZ72</id>
    </interactant>
    <interactant intactId="EBI-744099">
        <id>Q9H0I2</id>
        <label>ENKD1</label>
    </interactant>
    <organismsDiffer>false</organismsDiffer>
    <experiments>3</experiments>
</comment>
<comment type="interaction">
    <interactant intactId="EBI-725557">
        <id>Q9NZ72</id>
    </interactant>
    <interactant intactId="EBI-742102">
        <id>Q8IYI6</id>
        <label>EXOC8</label>
    </interactant>
    <organismsDiffer>false</organismsDiffer>
    <experiments>3</experiments>
</comment>
<comment type="interaction">
    <interactant intactId="EBI-725557">
        <id>Q9NZ72</id>
    </interactant>
    <interactant intactId="EBI-751540">
        <id>O95872</id>
        <label>GPANK1</label>
    </interactant>
    <organismsDiffer>false</organismsDiffer>
    <experiments>3</experiments>
</comment>
<comment type="interaction">
    <interactant intactId="EBI-725557">
        <id>Q9NZ72</id>
    </interactant>
    <interactant intactId="EBI-740220">
        <id>O14964</id>
        <label>HGS</label>
    </interactant>
    <organismsDiffer>false</organismsDiffer>
    <experiments>3</experiments>
</comment>
<comment type="interaction">
    <interactant intactId="EBI-725557">
        <id>Q9NZ72</id>
    </interactant>
    <interactant intactId="EBI-399080">
        <id>Q92993</id>
        <label>KAT5</label>
    </interactant>
    <organismsDiffer>false</organismsDiffer>
    <experiments>3</experiments>
</comment>
<comment type="interaction">
    <interactant intactId="EBI-725557">
        <id>Q9NZ72</id>
    </interactant>
    <interactant intactId="EBI-14069005">
        <id>Q9BVG8-5</id>
        <label>KIFC3</label>
    </interactant>
    <organismsDiffer>false</organismsDiffer>
    <experiments>3</experiments>
</comment>
<comment type="interaction">
    <interactant intactId="EBI-725557">
        <id>Q9NZ72</id>
    </interactant>
    <interactant intactId="EBI-1047093">
        <id>O76011</id>
        <label>KRT34</label>
    </interactant>
    <organismsDiffer>false</organismsDiffer>
    <experiments>3</experiments>
</comment>
<comment type="interaction">
    <interactant intactId="EBI-725557">
        <id>Q9NZ72</id>
    </interactant>
    <interactant intactId="EBI-2548751">
        <id>Q8TD10</id>
        <label>MIPOL1</label>
    </interactant>
    <organismsDiffer>false</organismsDiffer>
    <experiments>3</experiments>
</comment>
<comment type="interaction">
    <interactant intactId="EBI-725557">
        <id>Q9NZ72</id>
    </interactant>
    <interactant intactId="EBI-2340269">
        <id>Q13064</id>
        <label>MKRN3</label>
    </interactant>
    <organismsDiffer>false</organismsDiffer>
    <experiments>3</experiments>
</comment>
<comment type="interaction">
    <interactant intactId="EBI-725557">
        <id>Q9NZ72</id>
    </interactant>
    <interactant intactId="EBI-743811">
        <id>Q8NEH6</id>
        <label>MNS1</label>
    </interactant>
    <organismsDiffer>false</organismsDiffer>
    <experiments>3</experiments>
</comment>
<comment type="interaction">
    <interactant intactId="EBI-725557">
        <id>Q9NZ72</id>
    </interactant>
    <interactant intactId="EBI-10181968">
        <id>Q7Z4N8</id>
        <label>P4HA3</label>
    </interactant>
    <organismsDiffer>false</organismsDiffer>
    <experiments>3</experiments>
</comment>
<comment type="interaction">
    <interactant intactId="EBI-725557">
        <id>Q9NZ72</id>
    </interactant>
    <interactant intactId="EBI-602382">
        <id>Q16512</id>
        <label>PKN1</label>
    </interactant>
    <organismsDiffer>false</organismsDiffer>
    <experiments>3</experiments>
</comment>
<comment type="interaction">
    <interactant intactId="EBI-725557">
        <id>Q9NZ72</id>
    </interactant>
    <interactant intactId="EBI-12069346">
        <id>Q6IQ23-2</id>
        <label>PLEKHA7</label>
    </interactant>
    <organismsDiffer>false</organismsDiffer>
    <experiments>3</experiments>
</comment>
<comment type="interaction">
    <interactant intactId="EBI-725557">
        <id>Q9NZ72</id>
    </interactant>
    <interactant intactId="EBI-1055079">
        <id>O15160</id>
        <label>POLR1C</label>
    </interactant>
    <organismsDiffer>false</organismsDiffer>
    <experiments>3</experiments>
</comment>
<comment type="interaction">
    <interactant intactId="EBI-725557">
        <id>Q9NZ72</id>
    </interactant>
    <interactant intactId="EBI-358489">
        <id>Q96GM5</id>
        <label>SMARCD1</label>
    </interactant>
    <organismsDiffer>false</organismsDiffer>
    <experiments>3</experiments>
</comment>
<comment type="interaction">
    <interactant intactId="EBI-725557">
        <id>Q9NZ72</id>
    </interactant>
    <interactant intactId="EBI-12018146">
        <id>Q8IYX1</id>
        <label>TBC1D21</label>
    </interactant>
    <organismsDiffer>false</organismsDiffer>
    <experiments>3</experiments>
</comment>
<comment type="interaction">
    <interactant intactId="EBI-725557">
        <id>Q9NZ72</id>
    </interactant>
    <interactant intactId="EBI-11525489">
        <id>Q86WT6-2</id>
        <label>TRIM69</label>
    </interactant>
    <organismsDiffer>false</organismsDiffer>
    <experiments>3</experiments>
</comment>
<comment type="interaction">
    <interactant intactId="EBI-725557">
        <id>Q9NZ72</id>
    </interactant>
    <interactant intactId="EBI-6116822">
        <id>Q8N3L3</id>
        <label>TXLNB</label>
    </interactant>
    <organismsDiffer>false</organismsDiffer>
    <experiments>3</experiments>
</comment>
<comment type="interaction">
    <interactant intactId="EBI-725557">
        <id>Q9NZ72</id>
    </interactant>
    <interactant intactId="EBI-7254550">
        <id>P36508</id>
        <label>ZNF76</label>
    </interactant>
    <organismsDiffer>false</organismsDiffer>
    <experiments>3</experiments>
</comment>
<comment type="subcellular location">
    <subcellularLocation>
        <location evidence="7">Golgi apparatus</location>
    </subcellularLocation>
    <subcellularLocation>
        <location evidence="7">Cell projection</location>
        <location evidence="7">Growth cone</location>
    </subcellularLocation>
    <subcellularLocation>
        <location evidence="7">Cell projection</location>
        <location evidence="7">Axon</location>
    </subcellularLocation>
    <subcellularLocation>
        <location evidence="3">Cytoplasm</location>
        <location evidence="3">Cytosol</location>
    </subcellularLocation>
</comment>
<comment type="alternative products">
    <event type="alternative splicing"/>
    <isoform>
        <id>Q9NZ72-1</id>
        <name>1</name>
        <sequence type="displayed"/>
    </isoform>
    <isoform>
        <id>Q9NZ72-2</id>
        <name>2</name>
        <sequence type="described" ref="VSP_056525"/>
    </isoform>
</comment>
<comment type="tissue specificity">
    <text>Neuron specific.</text>
</comment>
<comment type="PTM">
    <text evidence="7">N-terminal palmitoylation promotes specific anchoring to the cytosolic leaflet of Golgi membranes and subsequent vesicular trafficking along dendrites and axons. Neuronal Stathmins are substrates for palmitoyltransferases ZDHHC3, ZDHHC7 and ZDHHC15.</text>
</comment>
<comment type="similarity">
    <text evidence="9">Belongs to the stathmin family.</text>
</comment>
<evidence type="ECO:0000250" key="1"/>
<evidence type="ECO:0000250" key="2">
    <source>
        <dbReference type="UniProtKB" id="O70166"/>
    </source>
</evidence>
<evidence type="ECO:0000250" key="3">
    <source>
        <dbReference type="UniProtKB" id="Q9JHU6"/>
    </source>
</evidence>
<evidence type="ECO:0000255" key="4"/>
<evidence type="ECO:0000255" key="5">
    <source>
        <dbReference type="PROSITE-ProRule" id="PRU00998"/>
    </source>
</evidence>
<evidence type="ECO:0000256" key="6">
    <source>
        <dbReference type="SAM" id="MobiDB-lite"/>
    </source>
</evidence>
<evidence type="ECO:0000269" key="7">
    <source>
    </source>
</evidence>
<evidence type="ECO:0000303" key="8">
    <source>
    </source>
</evidence>
<evidence type="ECO:0000305" key="9"/>
<name>STMN3_HUMAN</name>
<organism>
    <name type="scientific">Homo sapiens</name>
    <name type="common">Human</name>
    <dbReference type="NCBI Taxonomy" id="9606"/>
    <lineage>
        <taxon>Eukaryota</taxon>
        <taxon>Metazoa</taxon>
        <taxon>Chordata</taxon>
        <taxon>Craniata</taxon>
        <taxon>Vertebrata</taxon>
        <taxon>Euteleostomi</taxon>
        <taxon>Mammalia</taxon>
        <taxon>Eutheria</taxon>
        <taxon>Euarchontoglires</taxon>
        <taxon>Primates</taxon>
        <taxon>Haplorrhini</taxon>
        <taxon>Catarrhini</taxon>
        <taxon>Hominidae</taxon>
        <taxon>Homo</taxon>
    </lineage>
</organism>